<reference key="1">
    <citation type="journal article" date="2005" name="Proc. Natl. Acad. Sci. U.S.A.">
        <title>The genome of Salinibacter ruber: convergence and gene exchange among hyperhalophilic bacteria and archaea.</title>
        <authorList>
            <person name="Mongodin E.F."/>
            <person name="Nelson K.E."/>
            <person name="Daugherty S."/>
            <person name="DeBoy R.T."/>
            <person name="Wister J."/>
            <person name="Khouri H."/>
            <person name="Weidman J."/>
            <person name="Walsh D.A."/>
            <person name="Papke R.T."/>
            <person name="Sanchez Perez G."/>
            <person name="Sharma A.K."/>
            <person name="Nesbo C.L."/>
            <person name="MacLeod D."/>
            <person name="Bapteste E."/>
            <person name="Doolittle W.F."/>
            <person name="Charlebois R.L."/>
            <person name="Legault B."/>
            <person name="Rodriguez-Valera F."/>
        </authorList>
    </citation>
    <scope>NUCLEOTIDE SEQUENCE [LARGE SCALE GENOMIC DNA]</scope>
    <source>
        <strain>DSM 13855 / CECT 5946 / M31</strain>
    </source>
</reference>
<accession>Q2S3P3</accession>
<proteinExistence type="inferred from homology"/>
<gene>
    <name evidence="1" type="primary">infA</name>
    <name type="ordered locus">SRU_1056</name>
</gene>
<comment type="function">
    <text evidence="1">One of the essential components for the initiation of protein synthesis. Stabilizes the binding of IF-2 and IF-3 on the 30S subunit to which N-formylmethionyl-tRNA(fMet) subsequently binds. Helps modulate mRNA selection, yielding the 30S pre-initiation complex (PIC). Upon addition of the 50S ribosomal subunit IF-1, IF-2 and IF-3 are released leaving the mature 70S translation initiation complex.</text>
</comment>
<comment type="subunit">
    <text evidence="1">Component of the 30S ribosomal translation pre-initiation complex which assembles on the 30S ribosome in the order IF-2 and IF-3, IF-1 and N-formylmethionyl-tRNA(fMet); mRNA recruitment can occur at any time during PIC assembly.</text>
</comment>
<comment type="subcellular location">
    <subcellularLocation>
        <location evidence="1">Cytoplasm</location>
    </subcellularLocation>
</comment>
<comment type="similarity">
    <text evidence="1">Belongs to the IF-1 family.</text>
</comment>
<feature type="chain" id="PRO_0000263865" description="Translation initiation factor IF-1">
    <location>
        <begin position="1"/>
        <end position="73"/>
    </location>
</feature>
<feature type="domain" description="S1-like" evidence="1">
    <location>
        <begin position="1"/>
        <end position="72"/>
    </location>
</feature>
<evidence type="ECO:0000255" key="1">
    <source>
        <dbReference type="HAMAP-Rule" id="MF_00075"/>
    </source>
</evidence>
<protein>
    <recommendedName>
        <fullName evidence="1">Translation initiation factor IF-1</fullName>
    </recommendedName>
</protein>
<organism>
    <name type="scientific">Salinibacter ruber (strain DSM 13855 / M31)</name>
    <dbReference type="NCBI Taxonomy" id="309807"/>
    <lineage>
        <taxon>Bacteria</taxon>
        <taxon>Pseudomonadati</taxon>
        <taxon>Rhodothermota</taxon>
        <taxon>Rhodothermia</taxon>
        <taxon>Rhodothermales</taxon>
        <taxon>Salinibacteraceae</taxon>
        <taxon>Salinibacter</taxon>
    </lineage>
</organism>
<name>IF1_SALRD</name>
<sequence>MAKEEAIEKDGEVIEALPNAQFRVRLENGHEILGLLSGKMRMNYIKILPGDRVKVEMSPYDLSKGRIVYRYKN</sequence>
<keyword id="KW-0963">Cytoplasm</keyword>
<keyword id="KW-0396">Initiation factor</keyword>
<keyword id="KW-0648">Protein biosynthesis</keyword>
<keyword id="KW-1185">Reference proteome</keyword>
<keyword id="KW-0694">RNA-binding</keyword>
<keyword id="KW-0699">rRNA-binding</keyword>
<dbReference type="EMBL" id="CP000159">
    <property type="protein sequence ID" value="ABC43866.1"/>
    <property type="molecule type" value="Genomic_DNA"/>
</dbReference>
<dbReference type="RefSeq" id="WP_011403816.1">
    <property type="nucleotide sequence ID" value="NC_007677.1"/>
</dbReference>
<dbReference type="RefSeq" id="YP_445188.1">
    <property type="nucleotide sequence ID" value="NC_007677.1"/>
</dbReference>
<dbReference type="SMR" id="Q2S3P3"/>
<dbReference type="STRING" id="309807.SRU_1056"/>
<dbReference type="EnsemblBacteria" id="ABC43866">
    <property type="protein sequence ID" value="ABC43866"/>
    <property type="gene ID" value="SRU_1056"/>
</dbReference>
<dbReference type="GeneID" id="83727985"/>
<dbReference type="KEGG" id="sru:SRU_1056"/>
<dbReference type="PATRIC" id="fig|309807.25.peg.1094"/>
<dbReference type="eggNOG" id="COG0361">
    <property type="taxonomic scope" value="Bacteria"/>
</dbReference>
<dbReference type="HOGENOM" id="CLU_151267_1_0_10"/>
<dbReference type="OrthoDB" id="9803250at2"/>
<dbReference type="Proteomes" id="UP000008674">
    <property type="component" value="Chromosome"/>
</dbReference>
<dbReference type="GO" id="GO:0005829">
    <property type="term" value="C:cytosol"/>
    <property type="evidence" value="ECO:0007669"/>
    <property type="project" value="TreeGrafter"/>
</dbReference>
<dbReference type="GO" id="GO:0043022">
    <property type="term" value="F:ribosome binding"/>
    <property type="evidence" value="ECO:0007669"/>
    <property type="project" value="UniProtKB-UniRule"/>
</dbReference>
<dbReference type="GO" id="GO:0019843">
    <property type="term" value="F:rRNA binding"/>
    <property type="evidence" value="ECO:0007669"/>
    <property type="project" value="UniProtKB-UniRule"/>
</dbReference>
<dbReference type="GO" id="GO:0003743">
    <property type="term" value="F:translation initiation factor activity"/>
    <property type="evidence" value="ECO:0007669"/>
    <property type="project" value="UniProtKB-UniRule"/>
</dbReference>
<dbReference type="CDD" id="cd04451">
    <property type="entry name" value="S1_IF1"/>
    <property type="match status" value="1"/>
</dbReference>
<dbReference type="FunFam" id="2.40.50.140:FF:000002">
    <property type="entry name" value="Translation initiation factor IF-1"/>
    <property type="match status" value="1"/>
</dbReference>
<dbReference type="Gene3D" id="2.40.50.140">
    <property type="entry name" value="Nucleic acid-binding proteins"/>
    <property type="match status" value="1"/>
</dbReference>
<dbReference type="HAMAP" id="MF_00075">
    <property type="entry name" value="IF_1"/>
    <property type="match status" value="1"/>
</dbReference>
<dbReference type="InterPro" id="IPR012340">
    <property type="entry name" value="NA-bd_OB-fold"/>
</dbReference>
<dbReference type="InterPro" id="IPR006196">
    <property type="entry name" value="RNA-binding_domain_S1_IF1"/>
</dbReference>
<dbReference type="InterPro" id="IPR003029">
    <property type="entry name" value="S1_domain"/>
</dbReference>
<dbReference type="InterPro" id="IPR004368">
    <property type="entry name" value="TIF_IF1"/>
</dbReference>
<dbReference type="NCBIfam" id="TIGR00008">
    <property type="entry name" value="infA"/>
    <property type="match status" value="1"/>
</dbReference>
<dbReference type="PANTHER" id="PTHR33370">
    <property type="entry name" value="TRANSLATION INITIATION FACTOR IF-1, CHLOROPLASTIC"/>
    <property type="match status" value="1"/>
</dbReference>
<dbReference type="PANTHER" id="PTHR33370:SF1">
    <property type="entry name" value="TRANSLATION INITIATION FACTOR IF-1, CHLOROPLASTIC"/>
    <property type="match status" value="1"/>
</dbReference>
<dbReference type="Pfam" id="PF01176">
    <property type="entry name" value="eIF-1a"/>
    <property type="match status" value="1"/>
</dbReference>
<dbReference type="SMART" id="SM00316">
    <property type="entry name" value="S1"/>
    <property type="match status" value="1"/>
</dbReference>
<dbReference type="SUPFAM" id="SSF50249">
    <property type="entry name" value="Nucleic acid-binding proteins"/>
    <property type="match status" value="1"/>
</dbReference>
<dbReference type="PROSITE" id="PS50832">
    <property type="entry name" value="S1_IF1_TYPE"/>
    <property type="match status" value="1"/>
</dbReference>